<gene>
    <name evidence="8" type="primary">Rbx1</name>
</gene>
<keyword id="KW-0002">3D-structure</keyword>
<keyword id="KW-0007">Acetylation</keyword>
<keyword id="KW-0963">Cytoplasm</keyword>
<keyword id="KW-0227">DNA damage</keyword>
<keyword id="KW-0234">DNA repair</keyword>
<keyword id="KW-0479">Metal-binding</keyword>
<keyword id="KW-0539">Nucleus</keyword>
<keyword id="KW-0597">Phosphoprotein</keyword>
<keyword id="KW-1185">Reference proteome</keyword>
<keyword id="KW-0808">Transferase</keyword>
<keyword id="KW-0833">Ubl conjugation pathway</keyword>
<keyword id="KW-0862">Zinc</keyword>
<keyword id="KW-0863">Zinc-finger</keyword>
<comment type="function">
    <text evidence="1 4 6">E3 ubiquitin ligase component of multiple cullin-RING-based E3 ubiquitin-protein ligase (CRLs) complexes which mediate the ubiquitination and subsequent proteasomal degradation of target proteins, including proteins involved in cell cycle progression, signal transduction, transcription and transcription-coupled nucleotide excision repair (PubMed:22118460, PubMed:33590678). CRLs complexes and ARIH1 collaborate in tandem to mediate ubiquitination of target proteins, ARIH1 mediating addition of the first ubiquitin on CRLs targets (By similarity). The functional specificity of the E3 ubiquitin-protein ligase complexes depends on the variable substrate recognition components (By similarity). As a component of the CSA complex mediates ubiquitination of Pol II subunit RPB1 at 'Lys-1268', a critical TC-NER checkpoint (By similarity). Core component of the Cul7-RING(FBXW8) ubiquitin ligase complex, which mediates the ubiquitination and subsequent proteasomal degradation of target proteins (By similarity). Core component of a Cul9-RING ubiquitin ligase complex composed of CUL9 and RBX1, which mediates mono-ubiquitination of p53/TP53 (By similarity). Through the RING-type zinc finger, seems to recruit the E2 ubiquitination enzyme, like CDC34, to the complex and brings it into close proximity to the substrate (By similarity). Probably also stimulates CDC34 autoubiquitination (By similarity). May be required for histone H3 and histone H4 ubiquitination in response to ultraviolet and for subsequent DNA repair (By similarity). Promotes the neddylation of CUL1, CUL2, CUL4 and CUL4 via its interaction with UBE2M (By similarity). Involved in the ubiquitination of KEAP1, ENC1 and KLHL41 (By similarity). In concert with ATF2 and CUL3, promotes degradation of KAT5 thereby attenuating its ability to acetylate and activate ATM (By similarity). As part of a multisubunit complex composed of elongin BC complex (ELOB and ELOC), elongin A/ELOA, RBX1 and CUL5; polyubiquitinates monoubiquitinated POLR2A (By similarity).</text>
</comment>
<comment type="catalytic activity">
    <reaction evidence="1">
        <text>S-ubiquitinyl-[E2 ubiquitin-conjugating enzyme]-L-cysteine + [acceptor protein]-L-lysine = [E2 ubiquitin-conjugating enzyme]-L-cysteine + N(6)-ubiquitinyl-[acceptor protein]-L-lysine.</text>
        <dbReference type="EC" id="2.3.2.27"/>
    </reaction>
</comment>
<comment type="catalytic activity">
    <reaction evidence="1">
        <text>S-[NEDD8-protein]-yl-[E2 NEDD8-conjugating enzyme]-L-cysteine + [cullin]-L-lysine = [E2 NEDD8-conjugating enzyme]-L-cysteine + N(6)-[NEDD8-protein]-yl-[cullin]-L-lysine.</text>
        <dbReference type="EC" id="2.3.2.32"/>
    </reaction>
</comment>
<comment type="pathway">
    <text evidence="1">Protein modification; protein ubiquitination.</text>
</comment>
<comment type="pathway">
    <text evidence="1">Protein modification; protein neddylation.</text>
</comment>
<comment type="subunit">
    <text evidence="1 4 6">Component of multiple Cul1-RING E3 ubiquitin-protein ligase complexes commonly known as SCF (SKP1-CUL1-F-box) complexes, consisting of CUL1, SKP1, RBX1 and a variable F-box domain-containing protein (By similarity). Part of a SCF(SKP2) complex consisting of CUL1, RBX1, SKP1 and SKP2 (By similarity). Part of a SCF(FBXO3) complex consisting of CUL1, FBXO3, RBX1 and SKP1; this complex interacts with PML via FBXO3 (By similarity). Component of the SCF(Cyclin F) complex consisting of CUL1, RBX1, SKP1 and CCNF (By similarity). Identified in a SCF E3 ubiquitin ligase complex together with HINT1 and CDC34 (By similarity). Component of multiple Cul2-RING (CRL2) E3 ubiquitin-protein ligase complexes consisting of CUL2, Elongin BC (ELOB and ELOC), RBX1 and a variable substrate-specific adapter; this complex is also known as ECS (Elongin BC-CUL2/5-SOCS-box protein) complex and may consists of CUL2 or CUL5 (By similarity). Component of the CRL2(LRR1) complex with the substrate recognition component LRR1 (PubMed:33590678). Part of the ECS(VHL) or CBC(VHL) complex composed of CUL2 or CUL5, RBX1, ELOB, ELOC and VHL (By similarity). Part of the CRL2 complex with elongin BC complex (ELOB and ELOC), CUL2 and MED8; and part of the CRL5 complex with elongin BC complex (ELOB and ELOC), CUL5 and MUF1 (By similarity). Component of multiple BCR (BTB-CUL3-RBX1) or Cul3-RING E3 ubiquitin-protein ligase complexes formed of CUL3, RBX1 and a variable BTB domain-containing protein (By similarity). Part of the BCR(ENC1) complex containing ENC1 (By similarity). Part of the BCR(GAN) complex containing GAN (By similarity). Part of the BCR(KLHL41) complex containing KLHL41 (By similarity). Part of the BCR(KEAP1) complex containing KEAP1 (By similarity). Component of the BCR(KLHL22) E3 ubiquitin ligase complex, at least composed of CUL3, KLHL22 and RBX1 (By similarity). Component of the BCR(KBTBD4) E3 ubiquitin ligase complex, at least composed of CUL3, KBTBD4 and RBX1 (By similarity). Component of a BCR(KBTBD6/7) complex, composed of CUL3, RBX1, KBTBD6 and KBTBD7 (By similarity). Component of the BCR(ARMC5) E3 ubiquitin ligase complex, composed of CUL3, ARMC5 and RBX1 (By similarity). Component of Cul4-RING E3 ubiquitin-protein ligase complex, known as the CSA complex or DCX(ERCC8) complex, containing CUL4A, ERCC8, RBX1 and DDB1; the CSA complex interacts with RNA polymerase II; upon UV irradiation it interacts with the COP9 signalosome and preferentially with the hyperphosphorylated form of RNA polymerase II (By similarity). Component of the DCX DET1-COP1 ubiquitin ligase complex at least composed of CUL4A, RBX1, DET1, DDB1, and COP1 (By similarity). Part of an E3 ligase complex composed of CUL4A or CUL4B, RBX1, DDB1 and DDB2 (PubMed:22118460). Component of a Cul5-RING (CRL5) ubiquitin ligase complex consisting of CUL5, ELOB, ELOC, elongin A/ELOA, and RBX1 (By similarity). Part of CRL5 ubiquitin ligase complex with CUL5, ELOB, ELOC, SOCS1 or WSB1. Component of the Cul7-RING(FBXW8) complex consisting of CUL7, RBX1, SKP1 and FBXW8; within the complex interacts with CUL7 (By similarity). Component of the Cul9-RING complex consisting of CUL9 and RBX1; the CUL9-RBX1 complex is a heterododecamer composed of six CUL9 and six RBX1 protomers (By similarity). Interacts directly with CUL1, CUL2, CUL7 and CUL9; probably also with CUL3, CUL4A, CUL4B and CUL5 (By similarity). Interacts with CDC34 (By similarity). Interacts with GLMN; GLMN competes for the binding site of the E2 ubiquitin-conjugating enzyme CDC34 and disrupts CDC34 binding (By similarity). Interacts with COPS6 (By similarity). Interacts with UBE2M (By similarity). Interacts with SESN1 and SESN2 (By similarity). Interacts with NOTCH2 (By similarity). Interacts with DCUN1D1, DCUN1D2, DCUN1D3, DCUN1D4 and DCUN1D5 (By similarity). Interacts with CAND1 (PubMed:22118460).</text>
</comment>
<comment type="interaction">
    <interactant intactId="EBI-2507414">
        <id>P62878</id>
    </interactant>
    <interactant intactId="EBI-3939642">
        <id>P58004</id>
        <label>SESN2</label>
    </interactant>
    <organismsDiffer>true</organismsDiffer>
    <experiments>3</experiments>
</comment>
<comment type="subcellular location">
    <subcellularLocation>
        <location evidence="1">Cytoplasm</location>
    </subcellularLocation>
    <subcellularLocation>
        <location evidence="1">Nucleus</location>
    </subcellularLocation>
</comment>
<comment type="tissue specificity">
    <text evidence="3 5">Widely expressed (PubMed:10643962). Expressed in oocytes (at protein level) (PubMed:24357321).</text>
</comment>
<comment type="developmental stage">
    <text evidence="5">Expressed at high levels in zygotes and at lower levels in germinal vesicle (GV) stage oocytes and MII-stage oocytes. Expression strongly decreases from 2-cell stage to blastula.</text>
</comment>
<comment type="domain">
    <text evidence="1 4">The RING-type zinc finger domain is essential for ubiquitin ligase activity (By similarity). It coordinates an additional third zinc ion (PubMed:22118460).</text>
</comment>
<comment type="similarity">
    <text evidence="7">Belongs to the RING-box family.</text>
</comment>
<organism>
    <name type="scientific">Mus musculus</name>
    <name type="common">Mouse</name>
    <dbReference type="NCBI Taxonomy" id="10090"/>
    <lineage>
        <taxon>Eukaryota</taxon>
        <taxon>Metazoa</taxon>
        <taxon>Chordata</taxon>
        <taxon>Craniata</taxon>
        <taxon>Vertebrata</taxon>
        <taxon>Euteleostomi</taxon>
        <taxon>Mammalia</taxon>
        <taxon>Eutheria</taxon>
        <taxon>Euarchontoglires</taxon>
        <taxon>Glires</taxon>
        <taxon>Rodentia</taxon>
        <taxon>Myomorpha</taxon>
        <taxon>Muroidea</taxon>
        <taxon>Muridae</taxon>
        <taxon>Murinae</taxon>
        <taxon>Mus</taxon>
        <taxon>Mus</taxon>
    </lineage>
</organism>
<protein>
    <recommendedName>
        <fullName>E3 ubiquitin-protein ligase RBX1</fullName>
        <ecNumber evidence="1">2.3.2.27</ecNumber>
        <ecNumber evidence="1">2.3.2.32</ecNumber>
    </recommendedName>
    <alternativeName>
        <fullName evidence="7">E3 ubiquitin-protein transferase RBX1</fullName>
    </alternativeName>
    <alternativeName>
        <fullName>RING finger protein 75</fullName>
    </alternativeName>
    <alternativeName>
        <fullName>RING-box protein 1</fullName>
        <shortName>Rbx1</shortName>
    </alternativeName>
    <component>
        <recommendedName>
            <fullName>E3 ubiquitin-protein ligase RBX1, N-terminally processed</fullName>
        </recommendedName>
    </component>
</protein>
<reference key="1">
    <citation type="journal article" date="1999" name="Science">
        <title>Rbx1, a component of the VHL tumor suppressor complex and SCF ubiquitin ligase.</title>
        <authorList>
            <person name="Kamura T."/>
            <person name="Koepp D.M."/>
            <person name="Conrad M.N."/>
            <person name="Skowyra D."/>
            <person name="Moreland R.J."/>
            <person name="Iliopoulos O."/>
            <person name="Lane W.S."/>
            <person name="Kaelin W.G. Jr."/>
            <person name="Elledge S.J."/>
            <person name="Conaway R.C."/>
            <person name="Harper J.W."/>
            <person name="Conaway J.W."/>
        </authorList>
    </citation>
    <scope>NUCLEOTIDE SEQUENCE [MRNA]</scope>
    <scope>IDENTIFICATION IN CBC(VHL) COMPLEX</scope>
</reference>
<reference key="2">
    <citation type="journal article" date="2005" name="Science">
        <title>The transcriptional landscape of the mammalian genome.</title>
        <authorList>
            <person name="Carninci P."/>
            <person name="Kasukawa T."/>
            <person name="Katayama S."/>
            <person name="Gough J."/>
            <person name="Frith M.C."/>
            <person name="Maeda N."/>
            <person name="Oyama R."/>
            <person name="Ravasi T."/>
            <person name="Lenhard B."/>
            <person name="Wells C."/>
            <person name="Kodzius R."/>
            <person name="Shimokawa K."/>
            <person name="Bajic V.B."/>
            <person name="Brenner S.E."/>
            <person name="Batalov S."/>
            <person name="Forrest A.R."/>
            <person name="Zavolan M."/>
            <person name="Davis M.J."/>
            <person name="Wilming L.G."/>
            <person name="Aidinis V."/>
            <person name="Allen J.E."/>
            <person name="Ambesi-Impiombato A."/>
            <person name="Apweiler R."/>
            <person name="Aturaliya R.N."/>
            <person name="Bailey T.L."/>
            <person name="Bansal M."/>
            <person name="Baxter L."/>
            <person name="Beisel K.W."/>
            <person name="Bersano T."/>
            <person name="Bono H."/>
            <person name="Chalk A.M."/>
            <person name="Chiu K.P."/>
            <person name="Choudhary V."/>
            <person name="Christoffels A."/>
            <person name="Clutterbuck D.R."/>
            <person name="Crowe M.L."/>
            <person name="Dalla E."/>
            <person name="Dalrymple B.P."/>
            <person name="de Bono B."/>
            <person name="Della Gatta G."/>
            <person name="di Bernardo D."/>
            <person name="Down T."/>
            <person name="Engstrom P."/>
            <person name="Fagiolini M."/>
            <person name="Faulkner G."/>
            <person name="Fletcher C.F."/>
            <person name="Fukushima T."/>
            <person name="Furuno M."/>
            <person name="Futaki S."/>
            <person name="Gariboldi M."/>
            <person name="Georgii-Hemming P."/>
            <person name="Gingeras T.R."/>
            <person name="Gojobori T."/>
            <person name="Green R.E."/>
            <person name="Gustincich S."/>
            <person name="Harbers M."/>
            <person name="Hayashi Y."/>
            <person name="Hensch T.K."/>
            <person name="Hirokawa N."/>
            <person name="Hill D."/>
            <person name="Huminiecki L."/>
            <person name="Iacono M."/>
            <person name="Ikeo K."/>
            <person name="Iwama A."/>
            <person name="Ishikawa T."/>
            <person name="Jakt M."/>
            <person name="Kanapin A."/>
            <person name="Katoh M."/>
            <person name="Kawasawa Y."/>
            <person name="Kelso J."/>
            <person name="Kitamura H."/>
            <person name="Kitano H."/>
            <person name="Kollias G."/>
            <person name="Krishnan S.P."/>
            <person name="Kruger A."/>
            <person name="Kummerfeld S.K."/>
            <person name="Kurochkin I.V."/>
            <person name="Lareau L.F."/>
            <person name="Lazarevic D."/>
            <person name="Lipovich L."/>
            <person name="Liu J."/>
            <person name="Liuni S."/>
            <person name="McWilliam S."/>
            <person name="Madan Babu M."/>
            <person name="Madera M."/>
            <person name="Marchionni L."/>
            <person name="Matsuda H."/>
            <person name="Matsuzawa S."/>
            <person name="Miki H."/>
            <person name="Mignone F."/>
            <person name="Miyake S."/>
            <person name="Morris K."/>
            <person name="Mottagui-Tabar S."/>
            <person name="Mulder N."/>
            <person name="Nakano N."/>
            <person name="Nakauchi H."/>
            <person name="Ng P."/>
            <person name="Nilsson R."/>
            <person name="Nishiguchi S."/>
            <person name="Nishikawa S."/>
            <person name="Nori F."/>
            <person name="Ohara O."/>
            <person name="Okazaki Y."/>
            <person name="Orlando V."/>
            <person name="Pang K.C."/>
            <person name="Pavan W.J."/>
            <person name="Pavesi G."/>
            <person name="Pesole G."/>
            <person name="Petrovsky N."/>
            <person name="Piazza S."/>
            <person name="Reed J."/>
            <person name="Reid J.F."/>
            <person name="Ring B.Z."/>
            <person name="Ringwald M."/>
            <person name="Rost B."/>
            <person name="Ruan Y."/>
            <person name="Salzberg S.L."/>
            <person name="Sandelin A."/>
            <person name="Schneider C."/>
            <person name="Schoenbach C."/>
            <person name="Sekiguchi K."/>
            <person name="Semple C.A."/>
            <person name="Seno S."/>
            <person name="Sessa L."/>
            <person name="Sheng Y."/>
            <person name="Shibata Y."/>
            <person name="Shimada H."/>
            <person name="Shimada K."/>
            <person name="Silva D."/>
            <person name="Sinclair B."/>
            <person name="Sperling S."/>
            <person name="Stupka E."/>
            <person name="Sugiura K."/>
            <person name="Sultana R."/>
            <person name="Takenaka Y."/>
            <person name="Taki K."/>
            <person name="Tammoja K."/>
            <person name="Tan S.L."/>
            <person name="Tang S."/>
            <person name="Taylor M.S."/>
            <person name="Tegner J."/>
            <person name="Teichmann S.A."/>
            <person name="Ueda H.R."/>
            <person name="van Nimwegen E."/>
            <person name="Verardo R."/>
            <person name="Wei C.L."/>
            <person name="Yagi K."/>
            <person name="Yamanishi H."/>
            <person name="Zabarovsky E."/>
            <person name="Zhu S."/>
            <person name="Zimmer A."/>
            <person name="Hide W."/>
            <person name="Bult C."/>
            <person name="Grimmond S.M."/>
            <person name="Teasdale R.D."/>
            <person name="Liu E.T."/>
            <person name="Brusic V."/>
            <person name="Quackenbush J."/>
            <person name="Wahlestedt C."/>
            <person name="Mattick J.S."/>
            <person name="Hume D.A."/>
            <person name="Kai C."/>
            <person name="Sasaki D."/>
            <person name="Tomaru Y."/>
            <person name="Fukuda S."/>
            <person name="Kanamori-Katayama M."/>
            <person name="Suzuki M."/>
            <person name="Aoki J."/>
            <person name="Arakawa T."/>
            <person name="Iida J."/>
            <person name="Imamura K."/>
            <person name="Itoh M."/>
            <person name="Kato T."/>
            <person name="Kawaji H."/>
            <person name="Kawagashira N."/>
            <person name="Kawashima T."/>
            <person name="Kojima M."/>
            <person name="Kondo S."/>
            <person name="Konno H."/>
            <person name="Nakano K."/>
            <person name="Ninomiya N."/>
            <person name="Nishio T."/>
            <person name="Okada M."/>
            <person name="Plessy C."/>
            <person name="Shibata K."/>
            <person name="Shiraki T."/>
            <person name="Suzuki S."/>
            <person name="Tagami M."/>
            <person name="Waki K."/>
            <person name="Watahiki A."/>
            <person name="Okamura-Oho Y."/>
            <person name="Suzuki H."/>
            <person name="Kawai J."/>
            <person name="Hayashizaki Y."/>
        </authorList>
    </citation>
    <scope>NUCLEOTIDE SEQUENCE [LARGE SCALE MRNA]</scope>
    <source>
        <strain>C57BL/6J</strain>
        <tissue>Embryo</tissue>
    </source>
</reference>
<reference key="3">
    <citation type="journal article" date="2004" name="Genome Res.">
        <title>The status, quality, and expansion of the NIH full-length cDNA project: the Mammalian Gene Collection (MGC).</title>
        <authorList>
            <consortium name="The MGC Project Team"/>
        </authorList>
    </citation>
    <scope>NUCLEOTIDE SEQUENCE [LARGE SCALE MRNA]</scope>
    <source>
        <strain>C57BL/6J</strain>
        <tissue>Brain</tissue>
        <tissue>Mammary tumor</tissue>
    </source>
</reference>
<reference key="4">
    <citation type="journal article" date="1999" name="Cell. Mol. Biol.">
        <title>Genomic organization and expression of the ubiquitin-proteasome complex-associated protein Rbx1/ROC1/Hrt1.</title>
        <authorList>
            <person name="Perin J.-P."/>
            <person name="Seddiqi N."/>
            <person name="Charbonnier F."/>
            <person name="Goudou D."/>
            <person name="Belkadi L."/>
            <person name="Rieger F."/>
            <person name="Alliel P.M."/>
        </authorList>
    </citation>
    <scope>TISSUE SPECIFICITY</scope>
</reference>
<reference key="5">
    <citation type="journal article" date="2001" name="J. Biol. Chem.">
        <title>Muf1, a novel elongin BC-interacting leucine-rich repeat protein that can assemble with Cul5 and Rbx1 to reconstitute a ubiquitin ligase.</title>
        <authorList>
            <person name="Kamura T."/>
            <person name="Burian D."/>
            <person name="Yan Q."/>
            <person name="Schmidt S.L."/>
            <person name="Lane W.S."/>
            <person name="Querido E."/>
            <person name="Branton P.E."/>
            <person name="Shilatifard A."/>
            <person name="Conaway R.C."/>
            <person name="Conaway J.W."/>
        </authorList>
    </citation>
    <scope>IDENTIFICATION IN E3 UBIQUITIN LIGASE COMPLEX WITH MUF1</scope>
    <scope>IDENTIFICATION IN COMPLEXES WITH CUL5</scope>
</reference>
<reference key="6">
    <citation type="journal article" date="2002" name="Nature">
        <title>E3 ubiquitin ligase that recognizes sugar chains.</title>
        <authorList>
            <person name="Yoshida Y."/>
            <person name="Chiba T."/>
            <person name="Tokunaga F."/>
            <person name="Kawasaki H."/>
            <person name="Iwai K."/>
            <person name="Suzuki T."/>
            <person name="Ito Y."/>
            <person name="Matsuoka K."/>
            <person name="Yoshida M."/>
            <person name="Tanaka K."/>
            <person name="Tai T."/>
        </authorList>
    </citation>
    <scope>FUNCTION</scope>
    <scope>SUBUNIT</scope>
</reference>
<reference key="7">
    <citation type="journal article" date="2013" name="Science">
        <title>CRL4 complex regulates mammalian oocyte survival and reprogramming by activation of TET proteins.</title>
        <authorList>
            <person name="Yu C."/>
            <person name="Zhang Y.L."/>
            <person name="Pan W.W."/>
            <person name="Li X.M."/>
            <person name="Wang Z.W."/>
            <person name="Ge Z.J."/>
            <person name="Zhou J.J."/>
            <person name="Cang Y."/>
            <person name="Tong C."/>
            <person name="Sun Q.Y."/>
            <person name="Fan H.Y."/>
        </authorList>
    </citation>
    <scope>TISSUE SPECIFICITY</scope>
    <scope>DEVELOPMENTAL STAGE</scope>
</reference>
<reference key="8">
    <citation type="journal article" date="2021" name="EMBO Rep.">
        <title>CUL2LRR1, TRAIP and p97 control CMG helicase disassembly in the mammalian cell cycle.</title>
        <authorList>
            <person name="Villa F."/>
            <person name="Fujisawa R."/>
            <person name="Ainsworth J."/>
            <person name="Nishimura K."/>
            <person name="Lie-A-Ling M."/>
            <person name="Lacaud G."/>
            <person name="Labib K.P."/>
        </authorList>
    </citation>
    <scope>FUNCTION</scope>
    <scope>SUBUNIT</scope>
</reference>
<reference key="9">
    <citation type="journal article" date="2011" name="Cell">
        <title>The molecular basis of CRL4DDB2/CSA ubiquitin ligase architecture, targeting, and activation.</title>
        <authorList>
            <person name="Fischer E.S."/>
            <person name="Scrima A."/>
            <person name="Bohm K."/>
            <person name="Matsumoto S."/>
            <person name="Lingaraju G.M."/>
            <person name="Faty M."/>
            <person name="Yasuda T."/>
            <person name="Cavadini S."/>
            <person name="Wakasugi M."/>
            <person name="Hanaoka F."/>
            <person name="Iwai S."/>
            <person name="Gut H."/>
            <person name="Sugasawa K."/>
            <person name="Thoma N.H."/>
        </authorList>
    </citation>
    <scope>X-RAY CRYSTALLOGRAPHY (3.80 ANGSTROMS) OF 12-108 IN COMPLEXES WITH ZINC; DDB1; CUL4B; CAND1 AND DAMAGED DNA</scope>
    <scope>SUBUNIT</scope>
    <scope>FUNCTION</scope>
</reference>
<feature type="chain" id="PRO_0000423265" description="E3 ubiquitin-protein ligase RBX1">
    <location>
        <begin position="1"/>
        <end position="108"/>
    </location>
</feature>
<feature type="initiator methionine" description="Removed; alternate" evidence="1">
    <location>
        <position position="1"/>
    </location>
</feature>
<feature type="chain" id="PRO_0000056014" description="E3 ubiquitin-protein ligase RBX1, N-terminally processed">
    <location>
        <begin position="2"/>
        <end position="108"/>
    </location>
</feature>
<feature type="zinc finger region" description="RING-type" evidence="2">
    <location>
        <begin position="53"/>
        <end position="98"/>
    </location>
</feature>
<feature type="binding site" evidence="4">
    <location>
        <position position="42"/>
    </location>
    <ligand>
        <name>Zn(2+)</name>
        <dbReference type="ChEBI" id="CHEBI:29105"/>
        <label>1</label>
    </ligand>
</feature>
<feature type="binding site" evidence="4">
    <location>
        <position position="45"/>
    </location>
    <ligand>
        <name>Zn(2+)</name>
        <dbReference type="ChEBI" id="CHEBI:29105"/>
        <label>1</label>
    </ligand>
</feature>
<feature type="binding site" evidence="4">
    <location>
        <position position="53"/>
    </location>
    <ligand>
        <name>Zn(2+)</name>
        <dbReference type="ChEBI" id="CHEBI:29105"/>
        <label>2</label>
    </ligand>
</feature>
<feature type="binding site" evidence="4">
    <location>
        <position position="56"/>
    </location>
    <ligand>
        <name>Zn(2+)</name>
        <dbReference type="ChEBI" id="CHEBI:29105"/>
        <label>2</label>
    </ligand>
</feature>
<feature type="binding site" evidence="4">
    <location>
        <position position="68"/>
    </location>
    <ligand>
        <name>Zn(2+)</name>
        <dbReference type="ChEBI" id="CHEBI:29105"/>
        <label>2</label>
    </ligand>
</feature>
<feature type="binding site" evidence="4">
    <location>
        <position position="75"/>
    </location>
    <ligand>
        <name>Zn(2+)</name>
        <dbReference type="ChEBI" id="CHEBI:29105"/>
        <label>3</label>
    </ligand>
</feature>
<feature type="binding site" evidence="4">
    <location>
        <position position="77"/>
    </location>
    <ligand>
        <name>Zn(2+)</name>
        <dbReference type="ChEBI" id="CHEBI:29105"/>
        <label>3</label>
    </ligand>
</feature>
<feature type="binding site" evidence="4">
    <location>
        <position position="80"/>
    </location>
    <ligand>
        <name>Zn(2+)</name>
        <dbReference type="ChEBI" id="CHEBI:29105"/>
        <label>1</label>
    </ligand>
</feature>
<feature type="binding site" evidence="4">
    <location>
        <position position="82"/>
    </location>
    <ligand>
        <name>Zn(2+)</name>
        <dbReference type="ChEBI" id="CHEBI:29105"/>
        <label>2</label>
    </ligand>
</feature>
<feature type="binding site" evidence="1">
    <location>
        <position position="83"/>
    </location>
    <ligand>
        <name>Zn(2+)</name>
        <dbReference type="ChEBI" id="CHEBI:29105"/>
        <label>1</label>
    </ligand>
</feature>
<feature type="binding site" evidence="4">
    <location>
        <position position="94"/>
    </location>
    <ligand>
        <name>Zn(2+)</name>
        <dbReference type="ChEBI" id="CHEBI:29105"/>
        <label>3</label>
    </ligand>
</feature>
<feature type="binding site" evidence="4">
    <location>
        <position position="97"/>
    </location>
    <ligand>
        <name>Zn(2+)</name>
        <dbReference type="ChEBI" id="CHEBI:29105"/>
        <label>3</label>
    </ligand>
</feature>
<feature type="modified residue" description="N-acetylmethionine" evidence="1">
    <location>
        <position position="1"/>
    </location>
</feature>
<feature type="modified residue" description="N-acetylalanine; in E3 ubiquitin-protein ligase RBX1, N-terminally processed" evidence="1">
    <location>
        <position position="2"/>
    </location>
</feature>
<feature type="modified residue" description="Phosphothreonine" evidence="1">
    <location>
        <position position="9"/>
    </location>
</feature>
<feature type="sequence conflict" description="In Ref. 2; BAB22612." evidence="7" ref="2">
    <original>C</original>
    <variation>F</variation>
    <location>
        <position position="42"/>
    </location>
</feature>
<feature type="strand" evidence="9">
    <location>
        <begin position="32"/>
        <end position="34"/>
    </location>
</feature>
<proteinExistence type="evidence at protein level"/>
<accession>P62878</accession>
<accession>Q8N6Z8</accession>
<accession>Q9D1S2</accession>
<accession>Q9WUK9</accession>
<accession>Q9Y254</accession>
<name>RBX1_MOUSE</name>
<sequence length="108" mass="12274">MAAAMDVDTPSGTNSGAGKKRFEVKKWNAVALWAWDIVVDNCAICRNHIMDLCIECQANQASATSEECTVAWGVCNHAFHFHCISRWLKTRQVCPLDNREWEFQKYGH</sequence>
<evidence type="ECO:0000250" key="1">
    <source>
        <dbReference type="UniProtKB" id="P62877"/>
    </source>
</evidence>
<evidence type="ECO:0000255" key="2">
    <source>
        <dbReference type="PROSITE-ProRule" id="PRU00175"/>
    </source>
</evidence>
<evidence type="ECO:0000269" key="3">
    <source>
    </source>
</evidence>
<evidence type="ECO:0000269" key="4">
    <source>
    </source>
</evidence>
<evidence type="ECO:0000269" key="5">
    <source>
    </source>
</evidence>
<evidence type="ECO:0000269" key="6">
    <source>
    </source>
</evidence>
<evidence type="ECO:0000305" key="7"/>
<evidence type="ECO:0000312" key="8">
    <source>
        <dbReference type="MGI" id="MGI:1891829"/>
    </source>
</evidence>
<evidence type="ECO:0007829" key="9">
    <source>
        <dbReference type="PDB" id="7OPC"/>
    </source>
</evidence>
<dbReference type="EC" id="2.3.2.27" evidence="1"/>
<dbReference type="EC" id="2.3.2.32" evidence="1"/>
<dbReference type="EMBL" id="AF140599">
    <property type="protein sequence ID" value="AAD29716.1"/>
    <property type="molecule type" value="mRNA"/>
</dbReference>
<dbReference type="EMBL" id="AK003159">
    <property type="protein sequence ID" value="BAB22612.1"/>
    <property type="molecule type" value="mRNA"/>
</dbReference>
<dbReference type="EMBL" id="BC027396">
    <property type="protein sequence ID" value="AAH27396.1"/>
    <property type="molecule type" value="mRNA"/>
</dbReference>
<dbReference type="EMBL" id="BC051473">
    <property type="protein sequence ID" value="AAH51473.1"/>
    <property type="molecule type" value="mRNA"/>
</dbReference>
<dbReference type="EMBL" id="BC056992">
    <property type="protein sequence ID" value="AAH56992.1"/>
    <property type="molecule type" value="mRNA"/>
</dbReference>
<dbReference type="CCDS" id="CCDS49676.1"/>
<dbReference type="RefSeq" id="NP_062686.1">
    <property type="nucleotide sequence ID" value="NM_019712.3"/>
</dbReference>
<dbReference type="PDB" id="4A0C">
    <property type="method" value="X-ray"/>
    <property type="resolution" value="3.80 A"/>
    <property type="chains" value="D/F=12-108"/>
</dbReference>
<dbReference type="PDB" id="4A0K">
    <property type="method" value="X-ray"/>
    <property type="resolution" value="5.93 A"/>
    <property type="chains" value="B=12-108"/>
</dbReference>
<dbReference type="PDB" id="4A0L">
    <property type="method" value="X-ray"/>
    <property type="resolution" value="7.40 A"/>
    <property type="chains" value="F/I=12-108"/>
</dbReference>
<dbReference type="PDB" id="7OPC">
    <property type="method" value="EM"/>
    <property type="resolution" value="3.00 A"/>
    <property type="chains" value="f=1-108"/>
</dbReference>
<dbReference type="PDB" id="7OPD">
    <property type="method" value="EM"/>
    <property type="resolution" value="3.00 A"/>
    <property type="chains" value="f=1-108"/>
</dbReference>
<dbReference type="PDBsum" id="4A0C"/>
<dbReference type="PDBsum" id="4A0K"/>
<dbReference type="PDBsum" id="4A0L"/>
<dbReference type="PDBsum" id="7OPC"/>
<dbReference type="PDBsum" id="7OPD"/>
<dbReference type="EMDB" id="EMD-13015"/>
<dbReference type="EMDB" id="EMD-13016"/>
<dbReference type="EMDB" id="EMD-3313"/>
<dbReference type="EMDB" id="EMD-3314"/>
<dbReference type="EMDB" id="EMD-3315"/>
<dbReference type="EMDB" id="EMD-3316"/>
<dbReference type="EMDB" id="EMD-3317"/>
<dbReference type="SMR" id="P62878"/>
<dbReference type="BioGRID" id="207980">
    <property type="interactions" value="67"/>
</dbReference>
<dbReference type="ComplexPortal" id="CPX-650">
    <property type="entry name" value="CRL4-DDB2 E3 ubiquitin ligase complex, CUL4A variant"/>
</dbReference>
<dbReference type="ComplexPortal" id="CPX-651">
    <property type="entry name" value="CRL4-DDB2 E3 ubiquitin ligase complex, CUL4B variant"/>
</dbReference>
<dbReference type="CORUM" id="P62878"/>
<dbReference type="FunCoup" id="P62878">
    <property type="interactions" value="2440"/>
</dbReference>
<dbReference type="IntAct" id="P62878">
    <property type="interactions" value="12"/>
</dbReference>
<dbReference type="MINT" id="P62878"/>
<dbReference type="STRING" id="10090.ENSMUSP00000023036"/>
<dbReference type="iPTMnet" id="P62878"/>
<dbReference type="PhosphoSitePlus" id="P62878"/>
<dbReference type="SwissPalm" id="P62878"/>
<dbReference type="jPOST" id="P62878"/>
<dbReference type="PaxDb" id="10090-ENSMUSP00000023036"/>
<dbReference type="PeptideAtlas" id="P62878"/>
<dbReference type="ProteomicsDB" id="255051"/>
<dbReference type="Pumba" id="P62878"/>
<dbReference type="Antibodypedia" id="295">
    <property type="antibodies" value="345 antibodies from 41 providers"/>
</dbReference>
<dbReference type="DNASU" id="56438"/>
<dbReference type="Ensembl" id="ENSMUST00000023036.7">
    <property type="protein sequence ID" value="ENSMUSP00000023036.6"/>
    <property type="gene ID" value="ENSMUSG00000022400.10"/>
</dbReference>
<dbReference type="GeneID" id="56438"/>
<dbReference type="KEGG" id="mmu:56438"/>
<dbReference type="UCSC" id="uc007wwq.1">
    <property type="organism name" value="mouse"/>
</dbReference>
<dbReference type="AGR" id="MGI:1891829"/>
<dbReference type="CTD" id="9978"/>
<dbReference type="MGI" id="MGI:1891829">
    <property type="gene designation" value="Rbx1"/>
</dbReference>
<dbReference type="VEuPathDB" id="HostDB:ENSMUSG00000022400"/>
<dbReference type="eggNOG" id="KOG2930">
    <property type="taxonomic scope" value="Eukaryota"/>
</dbReference>
<dbReference type="GeneTree" id="ENSGT00940000155618"/>
<dbReference type="HOGENOM" id="CLU_115512_2_1_1"/>
<dbReference type="InParanoid" id="P62878"/>
<dbReference type="OMA" id="NACPLDN"/>
<dbReference type="OrthoDB" id="8962942at2759"/>
<dbReference type="PhylomeDB" id="P62878"/>
<dbReference type="TreeFam" id="TF105503"/>
<dbReference type="BioCyc" id="MetaCyc:ENSG00000100387-MONOMER"/>
<dbReference type="Reactome" id="R-MMU-110314">
    <property type="pathway name" value="Recognition of DNA damage by PCNA-containing replication complex"/>
</dbReference>
<dbReference type="Reactome" id="R-MMU-1170546">
    <property type="pathway name" value="Prolactin receptor signaling"/>
</dbReference>
<dbReference type="Reactome" id="R-MMU-1234176">
    <property type="pathway name" value="Oxygen-dependent proline hydroxylation of Hypoxia-inducible Factor Alpha"/>
</dbReference>
<dbReference type="Reactome" id="R-MMU-195253">
    <property type="pathway name" value="Degradation of beta-catenin by the destruction complex"/>
</dbReference>
<dbReference type="Reactome" id="R-MMU-4641258">
    <property type="pathway name" value="Degradation of DVL"/>
</dbReference>
<dbReference type="Reactome" id="R-MMU-5610780">
    <property type="pathway name" value="Degradation of GLI1 by the proteasome"/>
</dbReference>
<dbReference type="Reactome" id="R-MMU-5610785">
    <property type="pathway name" value="GLI3 is processed to GLI3R by the proteasome"/>
</dbReference>
<dbReference type="Reactome" id="R-MMU-5632684">
    <property type="pathway name" value="Hedgehog 'on' state"/>
</dbReference>
<dbReference type="Reactome" id="R-MMU-5658442">
    <property type="pathway name" value="Regulation of RAS by GAPs"/>
</dbReference>
<dbReference type="Reactome" id="R-MMU-5696394">
    <property type="pathway name" value="DNA Damage Recognition in GG-NER"/>
</dbReference>
<dbReference type="Reactome" id="R-MMU-5696395">
    <property type="pathway name" value="Formation of Incision Complex in GG-NER"/>
</dbReference>
<dbReference type="Reactome" id="R-MMU-5696400">
    <property type="pathway name" value="Dual Incision in GG-NER"/>
</dbReference>
<dbReference type="Reactome" id="R-MMU-6781823">
    <property type="pathway name" value="Formation of TC-NER Pre-Incision Complex"/>
</dbReference>
<dbReference type="Reactome" id="R-MMU-6782135">
    <property type="pathway name" value="Dual incision in TC-NER"/>
</dbReference>
<dbReference type="Reactome" id="R-MMU-6782210">
    <property type="pathway name" value="Gap-filling DNA repair synthesis and ligation in TC-NER"/>
</dbReference>
<dbReference type="Reactome" id="R-MMU-68949">
    <property type="pathway name" value="Orc1 removal from chromatin"/>
</dbReference>
<dbReference type="Reactome" id="R-MMU-8854050">
    <property type="pathway name" value="FBXL7 down-regulates AURKA during mitotic entry and in early mitosis"/>
</dbReference>
<dbReference type="Reactome" id="R-MMU-8939902">
    <property type="pathway name" value="Regulation of RUNX2 expression and activity"/>
</dbReference>
<dbReference type="Reactome" id="R-MMU-8951664">
    <property type="pathway name" value="Neddylation"/>
</dbReference>
<dbReference type="Reactome" id="R-MMU-9020702">
    <property type="pathway name" value="Interleukin-1 signaling"/>
</dbReference>
<dbReference type="Reactome" id="R-MMU-9708530">
    <property type="pathway name" value="Regulation of BACH1 activity"/>
</dbReference>
<dbReference type="Reactome" id="R-MMU-9755511">
    <property type="pathway name" value="KEAP1-NFE2L2 pathway"/>
</dbReference>
<dbReference type="Reactome" id="R-MMU-9762114">
    <property type="pathway name" value="GSK3B and BTRC:CUL1-mediated-degradation of NFE2L2"/>
</dbReference>
<dbReference type="Reactome" id="R-MMU-983168">
    <property type="pathway name" value="Antigen processing: Ubiquitination &amp; Proteasome degradation"/>
</dbReference>
<dbReference type="UniPathway" id="UPA00143"/>
<dbReference type="UniPathway" id="UPA00885"/>
<dbReference type="BioGRID-ORCS" id="56438">
    <property type="hits" value="32 hits in 117 CRISPR screens"/>
</dbReference>
<dbReference type="CD-CODE" id="5E82D60E">
    <property type="entry name" value="Nucleolus"/>
</dbReference>
<dbReference type="CD-CODE" id="CE726F99">
    <property type="entry name" value="Postsynaptic density"/>
</dbReference>
<dbReference type="ChiTaRS" id="Rbx1">
    <property type="organism name" value="mouse"/>
</dbReference>
<dbReference type="EvolutionaryTrace" id="P62878"/>
<dbReference type="PRO" id="PR:P62878"/>
<dbReference type="Proteomes" id="UP000000589">
    <property type="component" value="Chromosome 15"/>
</dbReference>
<dbReference type="RNAct" id="P62878">
    <property type="molecule type" value="protein"/>
</dbReference>
<dbReference type="Bgee" id="ENSMUSG00000022400">
    <property type="expression patterns" value="Expressed in yolk sac and 269 other cell types or tissues"/>
</dbReference>
<dbReference type="ExpressionAtlas" id="P62878">
    <property type="expression patterns" value="baseline and differential"/>
</dbReference>
<dbReference type="GO" id="GO:0005680">
    <property type="term" value="C:anaphase-promoting complex"/>
    <property type="evidence" value="ECO:0000304"/>
    <property type="project" value="UniProtKB"/>
</dbReference>
<dbReference type="GO" id="GO:0031462">
    <property type="term" value="C:Cul2-RING ubiquitin ligase complex"/>
    <property type="evidence" value="ECO:0007669"/>
    <property type="project" value="Ensembl"/>
</dbReference>
<dbReference type="GO" id="GO:0031463">
    <property type="term" value="C:Cul3-RING ubiquitin ligase complex"/>
    <property type="evidence" value="ECO:0000250"/>
    <property type="project" value="UniProtKB"/>
</dbReference>
<dbReference type="GO" id="GO:0031464">
    <property type="term" value="C:Cul4A-RING E3 ubiquitin ligase complex"/>
    <property type="evidence" value="ECO:0000269"/>
    <property type="project" value="ComplexPortal"/>
</dbReference>
<dbReference type="GO" id="GO:0031465">
    <property type="term" value="C:Cul4B-RING E3 ubiquitin ligase complex"/>
    <property type="evidence" value="ECO:0000250"/>
    <property type="project" value="UniProtKB"/>
</dbReference>
<dbReference type="GO" id="GO:0031466">
    <property type="term" value="C:Cul5-RING ubiquitin ligase complex"/>
    <property type="evidence" value="ECO:0007669"/>
    <property type="project" value="Ensembl"/>
</dbReference>
<dbReference type="GO" id="GO:0031467">
    <property type="term" value="C:Cul7-RING ubiquitin ligase complex"/>
    <property type="evidence" value="ECO:0000250"/>
    <property type="project" value="UniProtKB"/>
</dbReference>
<dbReference type="GO" id="GO:0031461">
    <property type="term" value="C:cullin-RING ubiquitin ligase complex"/>
    <property type="evidence" value="ECO:0000266"/>
    <property type="project" value="MGI"/>
</dbReference>
<dbReference type="GO" id="GO:0005829">
    <property type="term" value="C:cytosol"/>
    <property type="evidence" value="ECO:0000314"/>
    <property type="project" value="UniProtKB"/>
</dbReference>
<dbReference type="GO" id="GO:0005654">
    <property type="term" value="C:nucleoplasm"/>
    <property type="evidence" value="ECO:0007669"/>
    <property type="project" value="Ensembl"/>
</dbReference>
<dbReference type="GO" id="GO:0005634">
    <property type="term" value="C:nucleus"/>
    <property type="evidence" value="ECO:0000303"/>
    <property type="project" value="ComplexPortal"/>
</dbReference>
<dbReference type="GO" id="GO:0019005">
    <property type="term" value="C:SCF ubiquitin ligase complex"/>
    <property type="evidence" value="ECO:0000314"/>
    <property type="project" value="UniProtKB"/>
</dbReference>
<dbReference type="GO" id="GO:0000151">
    <property type="term" value="C:ubiquitin ligase complex"/>
    <property type="evidence" value="ECO:0000304"/>
    <property type="project" value="UniProtKB"/>
</dbReference>
<dbReference type="GO" id="GO:0097602">
    <property type="term" value="F:cullin family protein binding"/>
    <property type="evidence" value="ECO:0000266"/>
    <property type="project" value="MGI"/>
</dbReference>
<dbReference type="GO" id="GO:0008190">
    <property type="term" value="F:eukaryotic initiation factor 4E binding"/>
    <property type="evidence" value="ECO:0000304"/>
    <property type="project" value="UniProtKB"/>
</dbReference>
<dbReference type="GO" id="GO:0061663">
    <property type="term" value="F:NEDD8 ligase activity"/>
    <property type="evidence" value="ECO:0000250"/>
    <property type="project" value="UniProtKB"/>
</dbReference>
<dbReference type="GO" id="GO:0061629">
    <property type="term" value="F:RNA polymerase II-specific DNA-binding transcription factor binding"/>
    <property type="evidence" value="ECO:0007669"/>
    <property type="project" value="Ensembl"/>
</dbReference>
<dbReference type="GO" id="GO:0061630">
    <property type="term" value="F:ubiquitin protein ligase activity"/>
    <property type="evidence" value="ECO:0000266"/>
    <property type="project" value="MGI"/>
</dbReference>
<dbReference type="GO" id="GO:0031625">
    <property type="term" value="F:ubiquitin protein ligase binding"/>
    <property type="evidence" value="ECO:0007669"/>
    <property type="project" value="Ensembl"/>
</dbReference>
<dbReference type="GO" id="GO:0004842">
    <property type="term" value="F:ubiquitin-protein transferase activity"/>
    <property type="evidence" value="ECO:0000304"/>
    <property type="project" value="UniProtKB"/>
</dbReference>
<dbReference type="GO" id="GO:0034450">
    <property type="term" value="F:ubiquitin-ubiquitin ligase activity"/>
    <property type="evidence" value="ECO:0000266"/>
    <property type="project" value="MGI"/>
</dbReference>
<dbReference type="GO" id="GO:0008270">
    <property type="term" value="F:zinc ion binding"/>
    <property type="evidence" value="ECO:0007669"/>
    <property type="project" value="UniProtKB-KW"/>
</dbReference>
<dbReference type="GO" id="GO:0071230">
    <property type="term" value="P:cellular response to amino acid stimulus"/>
    <property type="evidence" value="ECO:0007669"/>
    <property type="project" value="Ensembl"/>
</dbReference>
<dbReference type="GO" id="GO:0034599">
    <property type="term" value="P:cellular response to oxidative stress"/>
    <property type="evidence" value="ECO:0007669"/>
    <property type="project" value="Ensembl"/>
</dbReference>
<dbReference type="GO" id="GO:0034644">
    <property type="term" value="P:cellular response to UV"/>
    <property type="evidence" value="ECO:0000269"/>
    <property type="project" value="ComplexPortal"/>
</dbReference>
<dbReference type="GO" id="GO:0006974">
    <property type="term" value="P:DNA damage response"/>
    <property type="evidence" value="ECO:0000269"/>
    <property type="project" value="ComplexPortal"/>
</dbReference>
<dbReference type="GO" id="GO:0046627">
    <property type="term" value="P:negative regulation of insulin receptor signaling pathway"/>
    <property type="evidence" value="ECO:0007669"/>
    <property type="project" value="Ensembl"/>
</dbReference>
<dbReference type="GO" id="GO:1902883">
    <property type="term" value="P:negative regulation of response to oxidative stress"/>
    <property type="evidence" value="ECO:0007669"/>
    <property type="project" value="Ensembl"/>
</dbReference>
<dbReference type="GO" id="GO:0032480">
    <property type="term" value="P:negative regulation of type I interferon production"/>
    <property type="evidence" value="ECO:0007669"/>
    <property type="project" value="Ensembl"/>
</dbReference>
<dbReference type="GO" id="GO:0043123">
    <property type="term" value="P:positive regulation of canonical NF-kappaB signal transduction"/>
    <property type="evidence" value="ECO:0007669"/>
    <property type="project" value="Ensembl"/>
</dbReference>
<dbReference type="GO" id="GO:0032436">
    <property type="term" value="P:positive regulation of proteasomal ubiquitin-dependent protein catabolic process"/>
    <property type="evidence" value="ECO:0007669"/>
    <property type="project" value="Ensembl"/>
</dbReference>
<dbReference type="GO" id="GO:1902499">
    <property type="term" value="P:positive regulation of protein autoubiquitination"/>
    <property type="evidence" value="ECO:0007669"/>
    <property type="project" value="Ensembl"/>
</dbReference>
<dbReference type="GO" id="GO:1904263">
    <property type="term" value="P:positive regulation of TORC1 signaling"/>
    <property type="evidence" value="ECO:0007669"/>
    <property type="project" value="Ensembl"/>
</dbReference>
<dbReference type="GO" id="GO:0043161">
    <property type="term" value="P:proteasome-mediated ubiquitin-dependent protein catabolic process"/>
    <property type="evidence" value="ECO:0000250"/>
    <property type="project" value="UniProtKB"/>
</dbReference>
<dbReference type="GO" id="GO:0030163">
    <property type="term" value="P:protein catabolic process"/>
    <property type="evidence" value="ECO:0000315"/>
    <property type="project" value="MGI"/>
</dbReference>
<dbReference type="GO" id="GO:0070936">
    <property type="term" value="P:protein K48-linked ubiquitination"/>
    <property type="evidence" value="ECO:0000314"/>
    <property type="project" value="MGI"/>
</dbReference>
<dbReference type="GO" id="GO:0006513">
    <property type="term" value="P:protein monoubiquitination"/>
    <property type="evidence" value="ECO:0000316"/>
    <property type="project" value="MGI"/>
</dbReference>
<dbReference type="GO" id="GO:0045116">
    <property type="term" value="P:protein neddylation"/>
    <property type="evidence" value="ECO:0000250"/>
    <property type="project" value="UniProtKB"/>
</dbReference>
<dbReference type="GO" id="GO:0016567">
    <property type="term" value="P:protein ubiquitination"/>
    <property type="evidence" value="ECO:0000314"/>
    <property type="project" value="UniProtKB"/>
</dbReference>
<dbReference type="GO" id="GO:0160240">
    <property type="term" value="P:RNA polymerase II transcription initiation surveillance"/>
    <property type="evidence" value="ECO:0000250"/>
    <property type="project" value="UniProtKB"/>
</dbReference>
<dbReference type="GO" id="GO:0031146">
    <property type="term" value="P:SCF-dependent proteasomal ubiquitin-dependent protein catabolic process"/>
    <property type="evidence" value="ECO:0000314"/>
    <property type="project" value="UniProtKB"/>
</dbReference>
<dbReference type="GO" id="GO:0007283">
    <property type="term" value="P:spermatogenesis"/>
    <property type="evidence" value="ECO:0007669"/>
    <property type="project" value="Ensembl"/>
</dbReference>
<dbReference type="GO" id="GO:0042110">
    <property type="term" value="P:T cell activation"/>
    <property type="evidence" value="ECO:0007669"/>
    <property type="project" value="Ensembl"/>
</dbReference>
<dbReference type="GO" id="GO:0006283">
    <property type="term" value="P:transcription-coupled nucleotide-excision repair"/>
    <property type="evidence" value="ECO:0007669"/>
    <property type="project" value="Ensembl"/>
</dbReference>
<dbReference type="GO" id="GO:0006511">
    <property type="term" value="P:ubiquitin-dependent protein catabolic process"/>
    <property type="evidence" value="ECO:0000304"/>
    <property type="project" value="UniProtKB"/>
</dbReference>
<dbReference type="GO" id="GO:0140627">
    <property type="term" value="P:ubiquitin-dependent protein catabolic process via the C-end degron rule pathway"/>
    <property type="evidence" value="ECO:0007669"/>
    <property type="project" value="Ensembl"/>
</dbReference>
<dbReference type="CDD" id="cd16485">
    <property type="entry name" value="mRING-H2-C3H2C2D_RBX1"/>
    <property type="match status" value="1"/>
</dbReference>
<dbReference type="FunFam" id="3.30.40.10:FF:000010">
    <property type="entry name" value="E3 ubiquitin-protein ligase RBX1"/>
    <property type="match status" value="1"/>
</dbReference>
<dbReference type="Gene3D" id="3.30.40.10">
    <property type="entry name" value="Zinc/RING finger domain, C3HC4 (zinc finger)"/>
    <property type="match status" value="1"/>
</dbReference>
<dbReference type="IDEAL" id="IID50217"/>
<dbReference type="InterPro" id="IPR051031">
    <property type="entry name" value="RING-box_E3_Ubiquitin_Ligase"/>
</dbReference>
<dbReference type="InterPro" id="IPR001841">
    <property type="entry name" value="Znf_RING"/>
</dbReference>
<dbReference type="InterPro" id="IPR013083">
    <property type="entry name" value="Znf_RING/FYVE/PHD"/>
</dbReference>
<dbReference type="InterPro" id="IPR024766">
    <property type="entry name" value="Znf_RING_H2"/>
</dbReference>
<dbReference type="PANTHER" id="PTHR11210">
    <property type="entry name" value="RING BOX"/>
    <property type="match status" value="1"/>
</dbReference>
<dbReference type="Pfam" id="PF12678">
    <property type="entry name" value="zf-rbx1"/>
    <property type="match status" value="1"/>
</dbReference>
<dbReference type="SUPFAM" id="SSF57850">
    <property type="entry name" value="RING/U-box"/>
    <property type="match status" value="1"/>
</dbReference>
<dbReference type="PROSITE" id="PS50089">
    <property type="entry name" value="ZF_RING_2"/>
    <property type="match status" value="1"/>
</dbReference>